<organism>
    <name type="scientific">Ureaplasma parvum serovar 3 (strain ATCC 700970)</name>
    <dbReference type="NCBI Taxonomy" id="273119"/>
    <lineage>
        <taxon>Bacteria</taxon>
        <taxon>Bacillati</taxon>
        <taxon>Mycoplasmatota</taxon>
        <taxon>Mycoplasmoidales</taxon>
        <taxon>Mycoplasmoidaceae</taxon>
        <taxon>Ureaplasma</taxon>
    </lineage>
</organism>
<accession>Q9PQA4</accession>
<feature type="chain" id="PRO_0000108740" description="Ribosomal RNA small subunit methyltransferase H">
    <location>
        <begin position="1"/>
        <end position="308"/>
    </location>
</feature>
<feature type="binding site" evidence="1">
    <location>
        <begin position="34"/>
        <end position="36"/>
    </location>
    <ligand>
        <name>S-adenosyl-L-methionine</name>
        <dbReference type="ChEBI" id="CHEBI:59789"/>
    </ligand>
</feature>
<feature type="binding site" evidence="1">
    <location>
        <position position="54"/>
    </location>
    <ligand>
        <name>S-adenosyl-L-methionine</name>
        <dbReference type="ChEBI" id="CHEBI:59789"/>
    </ligand>
</feature>
<feature type="binding site" evidence="1">
    <location>
        <position position="80"/>
    </location>
    <ligand>
        <name>S-adenosyl-L-methionine</name>
        <dbReference type="ChEBI" id="CHEBI:59789"/>
    </ligand>
</feature>
<feature type="binding site" evidence="1">
    <location>
        <position position="101"/>
    </location>
    <ligand>
        <name>S-adenosyl-L-methionine</name>
        <dbReference type="ChEBI" id="CHEBI:59789"/>
    </ligand>
</feature>
<feature type="binding site" evidence="1">
    <location>
        <position position="108"/>
    </location>
    <ligand>
        <name>S-adenosyl-L-methionine</name>
        <dbReference type="ChEBI" id="CHEBI:59789"/>
    </ligand>
</feature>
<protein>
    <recommendedName>
        <fullName evidence="1">Ribosomal RNA small subunit methyltransferase H</fullName>
        <ecNumber evidence="1">2.1.1.199</ecNumber>
    </recommendedName>
    <alternativeName>
        <fullName evidence="1">16S rRNA m(4)C1402 methyltransferase</fullName>
    </alternativeName>
    <alternativeName>
        <fullName evidence="1">rRNA (cytosine-N(4)-)-methyltransferase RsmH</fullName>
    </alternativeName>
</protein>
<gene>
    <name evidence="1" type="primary">rsmH</name>
    <name type="synonym">mraW</name>
    <name type="ordered locus">UU386</name>
</gene>
<sequence>MEFNQHITVLLNETIELLNIKPDGIYVDCTFGRGGHSQLILKKLSKKGKLICLDQDQEAINFANNLFKNNTNVIVIKTNFKNLKSALSAHKIFYVDGFIFDLGLSSPQLDDPKRGFSYHKNAWLDMRMDQSQNLNAHYIVNNYSFAKLVSIFKRYGEIKYPKIIADAIVKERSIKEINTTLELVEIIKKYSPKKNLFEKKHPARLFFQAIRIEVNDELNILEKAFNDAISMLNPLGVVAIISFHSLEDKIVKKVFNNYAKIKLPKEVPINNYVNKYSLLNQKIMPSTQELNDNNRSRSSILRGLIRNY</sequence>
<keyword id="KW-0963">Cytoplasm</keyword>
<keyword id="KW-0489">Methyltransferase</keyword>
<keyword id="KW-1185">Reference proteome</keyword>
<keyword id="KW-0698">rRNA processing</keyword>
<keyword id="KW-0949">S-adenosyl-L-methionine</keyword>
<keyword id="KW-0808">Transferase</keyword>
<proteinExistence type="inferred from homology"/>
<comment type="function">
    <text evidence="1">Specifically methylates the N4 position of cytidine in position 1402 (C1402) of 16S rRNA.</text>
</comment>
<comment type="catalytic activity">
    <reaction evidence="1">
        <text>cytidine(1402) in 16S rRNA + S-adenosyl-L-methionine = N(4)-methylcytidine(1402) in 16S rRNA + S-adenosyl-L-homocysteine + H(+)</text>
        <dbReference type="Rhea" id="RHEA:42928"/>
        <dbReference type="Rhea" id="RHEA-COMP:10286"/>
        <dbReference type="Rhea" id="RHEA-COMP:10287"/>
        <dbReference type="ChEBI" id="CHEBI:15378"/>
        <dbReference type="ChEBI" id="CHEBI:57856"/>
        <dbReference type="ChEBI" id="CHEBI:59789"/>
        <dbReference type="ChEBI" id="CHEBI:74506"/>
        <dbReference type="ChEBI" id="CHEBI:82748"/>
        <dbReference type="EC" id="2.1.1.199"/>
    </reaction>
</comment>
<comment type="subcellular location">
    <subcellularLocation>
        <location evidence="1">Cytoplasm</location>
    </subcellularLocation>
</comment>
<comment type="similarity">
    <text evidence="1">Belongs to the methyltransferase superfamily. RsmH family.</text>
</comment>
<dbReference type="EC" id="2.1.1.199" evidence="1"/>
<dbReference type="EMBL" id="AF222894">
    <property type="protein sequence ID" value="AAF30796.1"/>
    <property type="molecule type" value="Genomic_DNA"/>
</dbReference>
<dbReference type="RefSeq" id="WP_010891758.1">
    <property type="nucleotide sequence ID" value="NC_002162.1"/>
</dbReference>
<dbReference type="SMR" id="Q9PQA4"/>
<dbReference type="STRING" id="273119.UU386"/>
<dbReference type="EnsemblBacteria" id="AAF30796">
    <property type="protein sequence ID" value="AAF30796"/>
    <property type="gene ID" value="UU386"/>
</dbReference>
<dbReference type="GeneID" id="29672233"/>
<dbReference type="KEGG" id="uur:UU386"/>
<dbReference type="PATRIC" id="fig|273119.6.peg.401"/>
<dbReference type="eggNOG" id="COG0275">
    <property type="taxonomic scope" value="Bacteria"/>
</dbReference>
<dbReference type="HOGENOM" id="CLU_038422_2_0_14"/>
<dbReference type="OrthoDB" id="9806637at2"/>
<dbReference type="Proteomes" id="UP000000423">
    <property type="component" value="Chromosome"/>
</dbReference>
<dbReference type="GO" id="GO:0005737">
    <property type="term" value="C:cytoplasm"/>
    <property type="evidence" value="ECO:0007669"/>
    <property type="project" value="UniProtKB-SubCell"/>
</dbReference>
<dbReference type="GO" id="GO:0071424">
    <property type="term" value="F:rRNA (cytosine-N4-)-methyltransferase activity"/>
    <property type="evidence" value="ECO:0007669"/>
    <property type="project" value="UniProtKB-UniRule"/>
</dbReference>
<dbReference type="GO" id="GO:0070475">
    <property type="term" value="P:rRNA base methylation"/>
    <property type="evidence" value="ECO:0007669"/>
    <property type="project" value="UniProtKB-UniRule"/>
</dbReference>
<dbReference type="Gene3D" id="1.10.150.170">
    <property type="entry name" value="Putative methyltransferase TM0872, insert domain"/>
    <property type="match status" value="1"/>
</dbReference>
<dbReference type="Gene3D" id="3.40.50.150">
    <property type="entry name" value="Vaccinia Virus protein VP39"/>
    <property type="match status" value="1"/>
</dbReference>
<dbReference type="HAMAP" id="MF_01007">
    <property type="entry name" value="16SrRNA_methyltr_H"/>
    <property type="match status" value="1"/>
</dbReference>
<dbReference type="InterPro" id="IPR002903">
    <property type="entry name" value="RsmH"/>
</dbReference>
<dbReference type="InterPro" id="IPR023397">
    <property type="entry name" value="SAM-dep_MeTrfase_MraW_recog"/>
</dbReference>
<dbReference type="InterPro" id="IPR029063">
    <property type="entry name" value="SAM-dependent_MTases_sf"/>
</dbReference>
<dbReference type="NCBIfam" id="TIGR00006">
    <property type="entry name" value="16S rRNA (cytosine(1402)-N(4))-methyltransferase RsmH"/>
    <property type="match status" value="1"/>
</dbReference>
<dbReference type="PANTHER" id="PTHR11265:SF0">
    <property type="entry name" value="12S RRNA N4-METHYLCYTIDINE METHYLTRANSFERASE"/>
    <property type="match status" value="1"/>
</dbReference>
<dbReference type="PANTHER" id="PTHR11265">
    <property type="entry name" value="S-ADENOSYL-METHYLTRANSFERASE MRAW"/>
    <property type="match status" value="1"/>
</dbReference>
<dbReference type="Pfam" id="PF01795">
    <property type="entry name" value="Methyltransf_5"/>
    <property type="match status" value="1"/>
</dbReference>
<dbReference type="PIRSF" id="PIRSF004486">
    <property type="entry name" value="MraW"/>
    <property type="match status" value="1"/>
</dbReference>
<dbReference type="SUPFAM" id="SSF81799">
    <property type="entry name" value="Putative methyltransferase TM0872, insert domain"/>
    <property type="match status" value="1"/>
</dbReference>
<dbReference type="SUPFAM" id="SSF53335">
    <property type="entry name" value="S-adenosyl-L-methionine-dependent methyltransferases"/>
    <property type="match status" value="1"/>
</dbReference>
<reference key="1">
    <citation type="journal article" date="2000" name="Nature">
        <title>The complete sequence of the mucosal pathogen Ureaplasma urealyticum.</title>
        <authorList>
            <person name="Glass J.I."/>
            <person name="Lefkowitz E.J."/>
            <person name="Glass J.S."/>
            <person name="Heiner C.R."/>
            <person name="Chen E.Y."/>
            <person name="Cassell G.H."/>
        </authorList>
    </citation>
    <scope>NUCLEOTIDE SEQUENCE [LARGE SCALE GENOMIC DNA]</scope>
    <source>
        <strain>ATCC 700970</strain>
    </source>
</reference>
<evidence type="ECO:0000255" key="1">
    <source>
        <dbReference type="HAMAP-Rule" id="MF_01007"/>
    </source>
</evidence>
<name>RSMH_UREPA</name>